<feature type="chain" id="PRO_0000208003" description="Probable glucose-1-phosphate thymidylyltransferase">
    <location>
        <begin position="1"/>
        <end position="286"/>
    </location>
</feature>
<feature type="binding site" evidence="1">
    <location>
        <position position="108"/>
    </location>
    <ligand>
        <name>Mg(2+)</name>
        <dbReference type="ChEBI" id="CHEBI:18420"/>
    </ligand>
</feature>
<feature type="binding site" evidence="1">
    <location>
        <position position="223"/>
    </location>
    <ligand>
        <name>Mg(2+)</name>
        <dbReference type="ChEBI" id="CHEBI:18420"/>
    </ligand>
</feature>
<evidence type="ECO:0000250" key="1">
    <source>
        <dbReference type="UniProtKB" id="P61887"/>
    </source>
</evidence>
<evidence type="ECO:0000305" key="2"/>
<dbReference type="EC" id="2.7.7.24" evidence="1"/>
<dbReference type="EMBL" id="U00090">
    <property type="protein sequence ID" value="AAB91682.1"/>
    <property type="molecule type" value="Genomic_DNA"/>
</dbReference>
<dbReference type="RefSeq" id="NP_443870.1">
    <property type="nucleotide sequence ID" value="NC_000914.2"/>
</dbReference>
<dbReference type="RefSeq" id="WP_010875370.1">
    <property type="nucleotide sequence ID" value="NC_000914.2"/>
</dbReference>
<dbReference type="SMR" id="P55464"/>
<dbReference type="KEGG" id="rhi:NGR_a03560"/>
<dbReference type="PATRIC" id="fig|394.7.peg.364"/>
<dbReference type="eggNOG" id="COG1209">
    <property type="taxonomic scope" value="Bacteria"/>
</dbReference>
<dbReference type="HOGENOM" id="CLU_029499_9_0_5"/>
<dbReference type="OrthoDB" id="9803871at2"/>
<dbReference type="Proteomes" id="UP000001054">
    <property type="component" value="Plasmid pNGR234a"/>
</dbReference>
<dbReference type="GO" id="GO:0008879">
    <property type="term" value="F:glucose-1-phosphate thymidylyltransferase activity"/>
    <property type="evidence" value="ECO:0007669"/>
    <property type="project" value="UniProtKB-EC"/>
</dbReference>
<dbReference type="GO" id="GO:0046872">
    <property type="term" value="F:metal ion binding"/>
    <property type="evidence" value="ECO:0007669"/>
    <property type="project" value="UniProtKB-KW"/>
</dbReference>
<dbReference type="GO" id="GO:0009058">
    <property type="term" value="P:biosynthetic process"/>
    <property type="evidence" value="ECO:0007669"/>
    <property type="project" value="InterPro"/>
</dbReference>
<dbReference type="CDD" id="cd02538">
    <property type="entry name" value="G1P_TT_short"/>
    <property type="match status" value="1"/>
</dbReference>
<dbReference type="FunFam" id="3.90.550.10:FF:000023">
    <property type="entry name" value="Glucose-1-phosphate thymidylyltransferase"/>
    <property type="match status" value="1"/>
</dbReference>
<dbReference type="Gene3D" id="3.90.550.10">
    <property type="entry name" value="Spore Coat Polysaccharide Biosynthesis Protein SpsA, Chain A"/>
    <property type="match status" value="1"/>
</dbReference>
<dbReference type="InterPro" id="IPR005907">
    <property type="entry name" value="G1P_thy_trans_s"/>
</dbReference>
<dbReference type="InterPro" id="IPR005835">
    <property type="entry name" value="NTP_transferase_dom"/>
</dbReference>
<dbReference type="InterPro" id="IPR029044">
    <property type="entry name" value="Nucleotide-diphossugar_trans"/>
</dbReference>
<dbReference type="NCBIfam" id="TIGR01207">
    <property type="entry name" value="rmlA"/>
    <property type="match status" value="1"/>
</dbReference>
<dbReference type="PANTHER" id="PTHR43532">
    <property type="entry name" value="GLUCOSE-1-PHOSPHATE THYMIDYLYLTRANSFERASE"/>
    <property type="match status" value="1"/>
</dbReference>
<dbReference type="PANTHER" id="PTHR43532:SF1">
    <property type="entry name" value="GLUCOSE-1-PHOSPHATE THYMIDYLYLTRANSFERASE 1"/>
    <property type="match status" value="1"/>
</dbReference>
<dbReference type="Pfam" id="PF00483">
    <property type="entry name" value="NTP_transferase"/>
    <property type="match status" value="1"/>
</dbReference>
<dbReference type="SUPFAM" id="SSF53448">
    <property type="entry name" value="Nucleotide-diphospho-sugar transferases"/>
    <property type="match status" value="1"/>
</dbReference>
<name>RMLA_SINFN</name>
<proteinExistence type="inferred from homology"/>
<accession>P55464</accession>
<geneLocation type="plasmid">
    <name>sym pNGR234a</name>
</geneLocation>
<reference key="1">
    <citation type="journal article" date="1997" name="Nature">
        <title>Molecular basis of symbiosis between Rhizobium and legumes.</title>
        <authorList>
            <person name="Freiberg C.A."/>
            <person name="Fellay R."/>
            <person name="Bairoch A."/>
            <person name="Broughton W.J."/>
            <person name="Rosenthal A."/>
            <person name="Perret X."/>
        </authorList>
    </citation>
    <scope>NUCLEOTIDE SEQUENCE [LARGE SCALE GENOMIC DNA]</scope>
    <source>
        <strain>NBRC 101917 / NGR234</strain>
    </source>
</reference>
<reference key="2">
    <citation type="journal article" date="2009" name="Appl. Environ. Microbiol.">
        <title>Rhizobium sp. strain NGR234 possesses a remarkable number of secretion systems.</title>
        <authorList>
            <person name="Schmeisser C."/>
            <person name="Liesegang H."/>
            <person name="Krysciak D."/>
            <person name="Bakkou N."/>
            <person name="Le Quere A."/>
            <person name="Wollherr A."/>
            <person name="Heinemeyer I."/>
            <person name="Morgenstern B."/>
            <person name="Pommerening-Roeser A."/>
            <person name="Flores M."/>
            <person name="Palacios R."/>
            <person name="Brenner S."/>
            <person name="Gottschalk G."/>
            <person name="Schmitz R.A."/>
            <person name="Broughton W.J."/>
            <person name="Perret X."/>
            <person name="Strittmatter A.W."/>
            <person name="Streit W.R."/>
        </authorList>
    </citation>
    <scope>NUCLEOTIDE SEQUENCE [LARGE SCALE GENOMIC DNA]</scope>
    <source>
        <strain>NBRC 101917 / NGR234</strain>
    </source>
</reference>
<organism>
    <name type="scientific">Sinorhizobium fredii (strain NBRC 101917 / NGR234)</name>
    <dbReference type="NCBI Taxonomy" id="394"/>
    <lineage>
        <taxon>Bacteria</taxon>
        <taxon>Pseudomonadati</taxon>
        <taxon>Pseudomonadota</taxon>
        <taxon>Alphaproteobacteria</taxon>
        <taxon>Hyphomicrobiales</taxon>
        <taxon>Rhizobiaceae</taxon>
        <taxon>Sinorhizobium/Ensifer group</taxon>
        <taxon>Sinorhizobium</taxon>
    </lineage>
</organism>
<keyword id="KW-0460">Magnesium</keyword>
<keyword id="KW-0479">Metal-binding</keyword>
<keyword id="KW-0548">Nucleotidyltransferase</keyword>
<keyword id="KW-0614">Plasmid</keyword>
<keyword id="KW-1185">Reference proteome</keyword>
<keyword id="KW-0808">Transferase</keyword>
<gene>
    <name type="primary">rmlA</name>
    <name type="ordered locus">NGR_a03560</name>
    <name type="ORF">y4gH</name>
</gene>
<sequence>MKGIILAGGSGTRLHPMTLVMSKQILPVYDKPMIFYPLTTLMLAGIREILIISTPHHMPLFQALLGDGSQWGISLRYAVQPSPNGLAQAYVIGADFVAGSPSCLILGDNIYFGHGLQGLLQQAAALQQGATIFAYHVNDPERYGVVEFDEGMNALSIEEKPAAPKSTWAVTGLYFYDSEVVDIAANLKPSARGEYEITDVNRIYLERGKLKVAVLGRGYAWLDTGTPDSLLEAAEFVRTLEKRQAFKVACPEEVALAMGFISVEEFARIAERAGKGDYGAYLRRLA</sequence>
<comment type="function">
    <text evidence="1">Catalyzes the formation of dTDP-glucose, from dTTP and glucose 1-phosphate, as well as its pyrophosphorolysis.</text>
</comment>
<comment type="catalytic activity">
    <reaction evidence="1">
        <text>dTTP + alpha-D-glucose 1-phosphate + H(+) = dTDP-alpha-D-glucose + diphosphate</text>
        <dbReference type="Rhea" id="RHEA:15225"/>
        <dbReference type="ChEBI" id="CHEBI:15378"/>
        <dbReference type="ChEBI" id="CHEBI:33019"/>
        <dbReference type="ChEBI" id="CHEBI:37568"/>
        <dbReference type="ChEBI" id="CHEBI:57477"/>
        <dbReference type="ChEBI" id="CHEBI:58601"/>
        <dbReference type="EC" id="2.7.7.24"/>
    </reaction>
</comment>
<comment type="cofactor">
    <cofactor evidence="1">
        <name>Mg(2+)</name>
        <dbReference type="ChEBI" id="CHEBI:18420"/>
    </cofactor>
    <text evidence="1">Binds 1 Mg(2+) ion per subunit.</text>
</comment>
<comment type="subunit">
    <text evidence="1">Homotetramer.</text>
</comment>
<comment type="similarity">
    <text evidence="2">Belongs to the glucose-1-phosphate thymidylyltransferase family.</text>
</comment>
<protein>
    <recommendedName>
        <fullName>Probable glucose-1-phosphate thymidylyltransferase</fullName>
        <ecNumber evidence="1">2.7.7.24</ecNumber>
    </recommendedName>
    <alternativeName>
        <fullName>dTDP-glucose pyrophosphorylase</fullName>
    </alternativeName>
    <alternativeName>
        <fullName>dTDP-glucose synthase</fullName>
    </alternativeName>
</protein>